<name>DER_STAAE</name>
<keyword id="KW-0342">GTP-binding</keyword>
<keyword id="KW-0547">Nucleotide-binding</keyword>
<keyword id="KW-0677">Repeat</keyword>
<keyword id="KW-0690">Ribosome biogenesis</keyword>
<protein>
    <recommendedName>
        <fullName evidence="1">GTPase Der</fullName>
    </recommendedName>
    <alternativeName>
        <fullName evidence="1">GTP-binding protein EngA</fullName>
    </alternativeName>
</protein>
<organism>
    <name type="scientific">Staphylococcus aureus (strain Newman)</name>
    <dbReference type="NCBI Taxonomy" id="426430"/>
    <lineage>
        <taxon>Bacteria</taxon>
        <taxon>Bacillati</taxon>
        <taxon>Bacillota</taxon>
        <taxon>Bacilli</taxon>
        <taxon>Bacillales</taxon>
        <taxon>Staphylococcaceae</taxon>
        <taxon>Staphylococcus</taxon>
    </lineage>
</organism>
<reference key="1">
    <citation type="journal article" date="2008" name="J. Bacteriol.">
        <title>Genome sequence of Staphylococcus aureus strain Newman and comparative analysis of staphylococcal genomes: polymorphism and evolution of two major pathogenicity islands.</title>
        <authorList>
            <person name="Baba T."/>
            <person name="Bae T."/>
            <person name="Schneewind O."/>
            <person name="Takeuchi F."/>
            <person name="Hiramatsu K."/>
        </authorList>
    </citation>
    <scope>NUCLEOTIDE SEQUENCE [LARGE SCALE GENOMIC DNA]</scope>
    <source>
        <strain>Newman</strain>
    </source>
</reference>
<accession>A6QH24</accession>
<evidence type="ECO:0000255" key="1">
    <source>
        <dbReference type="HAMAP-Rule" id="MF_00195"/>
    </source>
</evidence>
<gene>
    <name evidence="1" type="primary">der</name>
    <name type="synonym">engA</name>
    <name type="ordered locus">NWMN_1384</name>
</gene>
<dbReference type="EMBL" id="AP009351">
    <property type="protein sequence ID" value="BAF67656.1"/>
    <property type="molecule type" value="Genomic_DNA"/>
</dbReference>
<dbReference type="RefSeq" id="WP_000165530.1">
    <property type="nucleotide sequence ID" value="NZ_JBBIAE010000001.1"/>
</dbReference>
<dbReference type="SMR" id="A6QH24"/>
<dbReference type="KEGG" id="sae:NWMN_1384"/>
<dbReference type="HOGENOM" id="CLU_016077_6_2_9"/>
<dbReference type="Proteomes" id="UP000006386">
    <property type="component" value="Chromosome"/>
</dbReference>
<dbReference type="GO" id="GO:0005525">
    <property type="term" value="F:GTP binding"/>
    <property type="evidence" value="ECO:0007669"/>
    <property type="project" value="UniProtKB-UniRule"/>
</dbReference>
<dbReference type="GO" id="GO:0043022">
    <property type="term" value="F:ribosome binding"/>
    <property type="evidence" value="ECO:0007669"/>
    <property type="project" value="TreeGrafter"/>
</dbReference>
<dbReference type="GO" id="GO:0042254">
    <property type="term" value="P:ribosome biogenesis"/>
    <property type="evidence" value="ECO:0007669"/>
    <property type="project" value="UniProtKB-KW"/>
</dbReference>
<dbReference type="CDD" id="cd01894">
    <property type="entry name" value="EngA1"/>
    <property type="match status" value="1"/>
</dbReference>
<dbReference type="CDD" id="cd01895">
    <property type="entry name" value="EngA2"/>
    <property type="match status" value="1"/>
</dbReference>
<dbReference type="FunFam" id="3.30.300.20:FF:000004">
    <property type="entry name" value="GTPase Der"/>
    <property type="match status" value="1"/>
</dbReference>
<dbReference type="FunFam" id="3.40.50.300:FF:000040">
    <property type="entry name" value="GTPase Der"/>
    <property type="match status" value="1"/>
</dbReference>
<dbReference type="FunFam" id="3.40.50.300:FF:000057">
    <property type="entry name" value="GTPase Der"/>
    <property type="match status" value="1"/>
</dbReference>
<dbReference type="Gene3D" id="3.30.300.20">
    <property type="match status" value="1"/>
</dbReference>
<dbReference type="Gene3D" id="3.40.50.300">
    <property type="entry name" value="P-loop containing nucleotide triphosphate hydrolases"/>
    <property type="match status" value="2"/>
</dbReference>
<dbReference type="HAMAP" id="MF_00195">
    <property type="entry name" value="GTPase_Der"/>
    <property type="match status" value="1"/>
</dbReference>
<dbReference type="InterPro" id="IPR031166">
    <property type="entry name" value="G_ENGA"/>
</dbReference>
<dbReference type="InterPro" id="IPR006073">
    <property type="entry name" value="GTP-bd"/>
</dbReference>
<dbReference type="InterPro" id="IPR016484">
    <property type="entry name" value="GTPase_Der"/>
</dbReference>
<dbReference type="InterPro" id="IPR032859">
    <property type="entry name" value="KH_dom-like"/>
</dbReference>
<dbReference type="InterPro" id="IPR015946">
    <property type="entry name" value="KH_dom-like_a/b"/>
</dbReference>
<dbReference type="InterPro" id="IPR027417">
    <property type="entry name" value="P-loop_NTPase"/>
</dbReference>
<dbReference type="InterPro" id="IPR005225">
    <property type="entry name" value="Small_GTP-bd"/>
</dbReference>
<dbReference type="NCBIfam" id="TIGR03594">
    <property type="entry name" value="GTPase_EngA"/>
    <property type="match status" value="1"/>
</dbReference>
<dbReference type="NCBIfam" id="TIGR00231">
    <property type="entry name" value="small_GTP"/>
    <property type="match status" value="2"/>
</dbReference>
<dbReference type="PANTHER" id="PTHR43834">
    <property type="entry name" value="GTPASE DER"/>
    <property type="match status" value="1"/>
</dbReference>
<dbReference type="PANTHER" id="PTHR43834:SF6">
    <property type="entry name" value="GTPASE DER"/>
    <property type="match status" value="1"/>
</dbReference>
<dbReference type="Pfam" id="PF14714">
    <property type="entry name" value="KH_dom-like"/>
    <property type="match status" value="1"/>
</dbReference>
<dbReference type="Pfam" id="PF01926">
    <property type="entry name" value="MMR_HSR1"/>
    <property type="match status" value="2"/>
</dbReference>
<dbReference type="PIRSF" id="PIRSF006485">
    <property type="entry name" value="GTP-binding_EngA"/>
    <property type="match status" value="1"/>
</dbReference>
<dbReference type="PRINTS" id="PR00326">
    <property type="entry name" value="GTP1OBG"/>
</dbReference>
<dbReference type="SUPFAM" id="SSF52540">
    <property type="entry name" value="P-loop containing nucleoside triphosphate hydrolases"/>
    <property type="match status" value="2"/>
</dbReference>
<dbReference type="PROSITE" id="PS51712">
    <property type="entry name" value="G_ENGA"/>
    <property type="match status" value="2"/>
</dbReference>
<feature type="chain" id="PRO_1000071708" description="GTPase Der">
    <location>
        <begin position="1"/>
        <end position="436"/>
    </location>
</feature>
<feature type="domain" description="EngA-type G 1">
    <location>
        <begin position="4"/>
        <end position="167"/>
    </location>
</feature>
<feature type="domain" description="EngA-type G 2">
    <location>
        <begin position="176"/>
        <end position="351"/>
    </location>
</feature>
<feature type="domain" description="KH-like" evidence="1">
    <location>
        <begin position="352"/>
        <end position="436"/>
    </location>
</feature>
<feature type="binding site" evidence="1">
    <location>
        <begin position="10"/>
        <end position="17"/>
    </location>
    <ligand>
        <name>GTP</name>
        <dbReference type="ChEBI" id="CHEBI:37565"/>
        <label>1</label>
    </ligand>
</feature>
<feature type="binding site" evidence="1">
    <location>
        <begin position="57"/>
        <end position="61"/>
    </location>
    <ligand>
        <name>GTP</name>
        <dbReference type="ChEBI" id="CHEBI:37565"/>
        <label>1</label>
    </ligand>
</feature>
<feature type="binding site" evidence="1">
    <location>
        <begin position="119"/>
        <end position="122"/>
    </location>
    <ligand>
        <name>GTP</name>
        <dbReference type="ChEBI" id="CHEBI:37565"/>
        <label>1</label>
    </ligand>
</feature>
<feature type="binding site" evidence="1">
    <location>
        <begin position="182"/>
        <end position="189"/>
    </location>
    <ligand>
        <name>GTP</name>
        <dbReference type="ChEBI" id="CHEBI:37565"/>
        <label>2</label>
    </ligand>
</feature>
<feature type="binding site" evidence="1">
    <location>
        <begin position="229"/>
        <end position="233"/>
    </location>
    <ligand>
        <name>GTP</name>
        <dbReference type="ChEBI" id="CHEBI:37565"/>
        <label>2</label>
    </ligand>
</feature>
<feature type="binding site" evidence="1">
    <location>
        <begin position="294"/>
        <end position="297"/>
    </location>
    <ligand>
        <name>GTP</name>
        <dbReference type="ChEBI" id="CHEBI:37565"/>
        <label>2</label>
    </ligand>
</feature>
<comment type="function">
    <text evidence="1">GTPase that plays an essential role in the late steps of ribosome biogenesis.</text>
</comment>
<comment type="subunit">
    <text evidence="1">Associates with the 50S ribosomal subunit.</text>
</comment>
<comment type="similarity">
    <text evidence="1">Belongs to the TRAFAC class TrmE-Era-EngA-EngB-Septin-like GTPase superfamily. EngA (Der) GTPase family.</text>
</comment>
<proteinExistence type="inferred from homology"/>
<sequence>MTKPIVAIVGRPNVGKSTIFNRIVGERVSIVEDTPGVTRDRIYSSGEWLTHDFNIIDTGGIEIGDAPFQTQIRAQAEIAIDEADVIIFMVNVREGLTQSDEMVAQILYKSKKPVVLAVNKVDNMEMRTDVYDFYSLGFGEPYPISGSHGLGLGDLLDAVVSHFGEEEEDPYDEDTIRLSIIGRPNVGKSSLVNAILGEDRVIVSNVAGTTRDAIDTEYSYDGQDYVLIDTAGMRKKGKVYESTEKYSVLRALKAIERSNVVLVVIDAEQGIIEQDKRVAGYAHEQGKAVVIVVNKWDTVEKDSKTMKKFEDEVRKEFQFLDYAQIAFVSAKERTRLRTLFPYINEASENHKKRVQSSTLNEVVTDAISMNPTPTDKGRRLNVFYATQVAIEPPTFVVFVNDVELMHFSYKRYLENQIRAAFGFEGTPIHIIARKRN</sequence>